<name>COQ7_PSEAE</name>
<accession>Q9I5R6</accession>
<sequence length="215" mass="23644">MSADRHYSPIDRFLLQADSALRTLLPFSGQPARPSPAIVEPDGELSEEDTRHIAGLMRINHTGEVCAQALYQGQSLTAKLPEVREAMEEAAEEEIDHLAWCEQRIRQLGSRPSVLNPIFYGLSFGVGAAAGLVSDRVSLGFVAATEDQVCKHLDEHLAQIPQEDRKSRAILEQMRIDEEQHSSNALAAGGLRFPAPVKLGMSLLAKVMTKSTYRI</sequence>
<feature type="chain" id="PRO_0000338707" description="3-demethoxyubiquinol 3-hydroxylase">
    <location>
        <begin position="1"/>
        <end position="215"/>
    </location>
</feature>
<feature type="binding site" evidence="1 5">
    <location>
        <position position="64"/>
    </location>
    <ligand>
        <name>Fe cation</name>
        <dbReference type="ChEBI" id="CHEBI:24875"/>
        <label>1</label>
    </ligand>
</feature>
<feature type="binding site" evidence="1 5">
    <location>
        <position position="94"/>
    </location>
    <ligand>
        <name>Fe cation</name>
        <dbReference type="ChEBI" id="CHEBI:24875"/>
        <label>1</label>
    </ligand>
</feature>
<feature type="binding site" evidence="1 5">
    <location>
        <position position="94"/>
    </location>
    <ligand>
        <name>Fe cation</name>
        <dbReference type="ChEBI" id="CHEBI:24875"/>
        <label>2</label>
    </ligand>
</feature>
<feature type="binding site" evidence="1 5">
    <location>
        <position position="97"/>
    </location>
    <ligand>
        <name>Fe cation</name>
        <dbReference type="ChEBI" id="CHEBI:24875"/>
        <label>1</label>
    </ligand>
</feature>
<feature type="binding site" evidence="1 5">
    <location>
        <position position="146"/>
    </location>
    <ligand>
        <name>Fe cation</name>
        <dbReference type="ChEBI" id="CHEBI:24875"/>
        <label>2</label>
    </ligand>
</feature>
<feature type="binding site" evidence="1 5">
    <location>
        <position position="178"/>
    </location>
    <ligand>
        <name>Fe cation</name>
        <dbReference type="ChEBI" id="CHEBI:24875"/>
        <label>1</label>
    </ligand>
</feature>
<feature type="binding site" evidence="1 5">
    <location>
        <position position="178"/>
    </location>
    <ligand>
        <name>Fe cation</name>
        <dbReference type="ChEBI" id="CHEBI:24875"/>
        <label>2</label>
    </ligand>
</feature>
<feature type="binding site" evidence="1 5">
    <location>
        <position position="181"/>
    </location>
    <ligand>
        <name>Fe cation</name>
        <dbReference type="ChEBI" id="CHEBI:24875"/>
        <label>2</label>
    </ligand>
</feature>
<organism>
    <name type="scientific">Pseudomonas aeruginosa (strain ATCC 15692 / DSM 22644 / CIP 104116 / JCM 14847 / LMG 12228 / 1C / PRS 101 / PAO1)</name>
    <dbReference type="NCBI Taxonomy" id="208964"/>
    <lineage>
        <taxon>Bacteria</taxon>
        <taxon>Pseudomonadati</taxon>
        <taxon>Pseudomonadota</taxon>
        <taxon>Gammaproteobacteria</taxon>
        <taxon>Pseudomonadales</taxon>
        <taxon>Pseudomonadaceae</taxon>
        <taxon>Pseudomonas</taxon>
    </lineage>
</organism>
<evidence type="ECO:0000255" key="1">
    <source>
        <dbReference type="HAMAP-Rule" id="MF_01658"/>
    </source>
</evidence>
<evidence type="ECO:0000269" key="2">
    <source>
    </source>
</evidence>
<evidence type="ECO:0000303" key="3">
    <source>
    </source>
</evidence>
<evidence type="ECO:0000305" key="4"/>
<evidence type="ECO:0000305" key="5">
    <source>
    </source>
</evidence>
<comment type="function">
    <text evidence="1 2">Catalyzes the hydroxylation of 2-nonaprenyl-3-methyl-6-methoxy-1,4-benzoquinol during ubiquinone biosynthesis.</text>
</comment>
<comment type="catalytic activity">
    <reaction evidence="1 2">
        <text>a 5-methoxy-2-methyl-3-(all-trans-polyprenyl)benzene-1,4-diol + AH2 + O2 = a 3-demethylubiquinol + A + H2O</text>
        <dbReference type="Rhea" id="RHEA:50908"/>
        <dbReference type="Rhea" id="RHEA-COMP:10859"/>
        <dbReference type="Rhea" id="RHEA-COMP:10914"/>
        <dbReference type="ChEBI" id="CHEBI:13193"/>
        <dbReference type="ChEBI" id="CHEBI:15377"/>
        <dbReference type="ChEBI" id="CHEBI:15379"/>
        <dbReference type="ChEBI" id="CHEBI:17499"/>
        <dbReference type="ChEBI" id="CHEBI:84167"/>
        <dbReference type="ChEBI" id="CHEBI:84422"/>
        <dbReference type="EC" id="1.14.99.60"/>
    </reaction>
</comment>
<comment type="cofactor">
    <cofactor evidence="1 5">
        <name>Fe cation</name>
        <dbReference type="ChEBI" id="CHEBI:24875"/>
    </cofactor>
    <text evidence="1 5">Binds 2 iron ions per subunit.</text>
</comment>
<comment type="pathway">
    <text evidence="1 2">Cofactor biosynthesis; ubiquinone biosynthesis.</text>
</comment>
<comment type="subcellular location">
    <subcellularLocation>
        <location evidence="1 5">Cell membrane</location>
        <topology evidence="1 5">Peripheral membrane protein</topology>
    </subcellularLocation>
</comment>
<comment type="similarity">
    <text evidence="1 4">Belongs to the COQ7 family.</text>
</comment>
<dbReference type="EC" id="1.14.99.60" evidence="1 2"/>
<dbReference type="EMBL" id="AE004091">
    <property type="protein sequence ID" value="AAG04044.1"/>
    <property type="molecule type" value="Genomic_DNA"/>
</dbReference>
<dbReference type="PIR" id="E83564">
    <property type="entry name" value="E83564"/>
</dbReference>
<dbReference type="RefSeq" id="NP_249346.1">
    <property type="nucleotide sequence ID" value="NC_002516.2"/>
</dbReference>
<dbReference type="RefSeq" id="WP_003085224.1">
    <property type="nucleotide sequence ID" value="NZ_QZGE01000010.1"/>
</dbReference>
<dbReference type="SMR" id="Q9I5R6"/>
<dbReference type="STRING" id="208964.PA0655"/>
<dbReference type="PaxDb" id="208964-PA0655"/>
<dbReference type="DNASU" id="880759"/>
<dbReference type="GeneID" id="880759"/>
<dbReference type="KEGG" id="pae:PA0655"/>
<dbReference type="PATRIC" id="fig|208964.12.peg.686"/>
<dbReference type="PseudoCAP" id="PA0655"/>
<dbReference type="HOGENOM" id="CLU_088601_0_0_6"/>
<dbReference type="InParanoid" id="Q9I5R6"/>
<dbReference type="OrthoDB" id="5192789at2"/>
<dbReference type="PhylomeDB" id="Q9I5R6"/>
<dbReference type="BioCyc" id="MetaCyc:MONOMER-13881"/>
<dbReference type="BioCyc" id="PAER208964:G1FZ6-660-MONOMER"/>
<dbReference type="BRENDA" id="1.14.99.60">
    <property type="organism ID" value="5087"/>
</dbReference>
<dbReference type="UniPathway" id="UPA00232"/>
<dbReference type="Proteomes" id="UP000002438">
    <property type="component" value="Chromosome"/>
</dbReference>
<dbReference type="GO" id="GO:0016020">
    <property type="term" value="C:membrane"/>
    <property type="evidence" value="ECO:0000303"/>
    <property type="project" value="UniProtKB"/>
</dbReference>
<dbReference type="GO" id="GO:0005886">
    <property type="term" value="C:plasma membrane"/>
    <property type="evidence" value="ECO:0007669"/>
    <property type="project" value="UniProtKB-SubCell"/>
</dbReference>
<dbReference type="GO" id="GO:0008682">
    <property type="term" value="F:3-demethoxyubiquinol 3-hydroxylase activity"/>
    <property type="evidence" value="ECO:0007669"/>
    <property type="project" value="UniProtKB-EC"/>
</dbReference>
<dbReference type="GO" id="GO:0046872">
    <property type="term" value="F:metal ion binding"/>
    <property type="evidence" value="ECO:0007669"/>
    <property type="project" value="UniProtKB-KW"/>
</dbReference>
<dbReference type="GO" id="GO:0004497">
    <property type="term" value="F:monooxygenase activity"/>
    <property type="evidence" value="ECO:0000316"/>
    <property type="project" value="UniProtKB"/>
</dbReference>
<dbReference type="GO" id="GO:0006744">
    <property type="term" value="P:ubiquinone biosynthetic process"/>
    <property type="evidence" value="ECO:0000316"/>
    <property type="project" value="UniProtKB"/>
</dbReference>
<dbReference type="CDD" id="cd01042">
    <property type="entry name" value="DMQH"/>
    <property type="match status" value="1"/>
</dbReference>
<dbReference type="FunFam" id="1.20.1260.10:FF:000013">
    <property type="entry name" value="2-nonaprenyl-3-methyl-6-methoxy-1,4-benzoquinol hydroxylase"/>
    <property type="match status" value="1"/>
</dbReference>
<dbReference type="Gene3D" id="1.20.1260.10">
    <property type="match status" value="1"/>
</dbReference>
<dbReference type="HAMAP" id="MF_01658">
    <property type="entry name" value="COQ7"/>
    <property type="match status" value="1"/>
</dbReference>
<dbReference type="InterPro" id="IPR047809">
    <property type="entry name" value="COQ7_proteobact"/>
</dbReference>
<dbReference type="InterPro" id="IPR012347">
    <property type="entry name" value="Ferritin-like"/>
</dbReference>
<dbReference type="InterPro" id="IPR009078">
    <property type="entry name" value="Ferritin-like_SF"/>
</dbReference>
<dbReference type="InterPro" id="IPR011566">
    <property type="entry name" value="Ubq_synth_Coq7"/>
</dbReference>
<dbReference type="NCBIfam" id="NF033656">
    <property type="entry name" value="DMQ_monoox_COQ7"/>
    <property type="match status" value="1"/>
</dbReference>
<dbReference type="PANTHER" id="PTHR11237:SF4">
    <property type="entry name" value="5-DEMETHOXYUBIQUINONE HYDROXYLASE, MITOCHONDRIAL"/>
    <property type="match status" value="1"/>
</dbReference>
<dbReference type="PANTHER" id="PTHR11237">
    <property type="entry name" value="COENZYME Q10 BIOSYNTHESIS PROTEIN 7"/>
    <property type="match status" value="1"/>
</dbReference>
<dbReference type="Pfam" id="PF03232">
    <property type="entry name" value="COQ7"/>
    <property type="match status" value="1"/>
</dbReference>
<dbReference type="SUPFAM" id="SSF47240">
    <property type="entry name" value="Ferritin-like"/>
    <property type="match status" value="1"/>
</dbReference>
<proteinExistence type="evidence at protein level"/>
<keyword id="KW-1003">Cell membrane</keyword>
<keyword id="KW-0408">Iron</keyword>
<keyword id="KW-0472">Membrane</keyword>
<keyword id="KW-0479">Metal-binding</keyword>
<keyword id="KW-0503">Monooxygenase</keyword>
<keyword id="KW-0560">Oxidoreductase</keyword>
<keyword id="KW-1185">Reference proteome</keyword>
<keyword id="KW-0831">Ubiquinone biosynthesis</keyword>
<gene>
    <name evidence="1 3" type="primary">coq7</name>
    <name type="ordered locus">PA0655</name>
</gene>
<reference key="1">
    <citation type="journal article" date="2000" name="Nature">
        <title>Complete genome sequence of Pseudomonas aeruginosa PAO1, an opportunistic pathogen.</title>
        <authorList>
            <person name="Stover C.K."/>
            <person name="Pham X.-Q.T."/>
            <person name="Erwin A.L."/>
            <person name="Mizoguchi S.D."/>
            <person name="Warrener P."/>
            <person name="Hickey M.J."/>
            <person name="Brinkman F.S.L."/>
            <person name="Hufnagle W.O."/>
            <person name="Kowalik D.J."/>
            <person name="Lagrou M."/>
            <person name="Garber R.L."/>
            <person name="Goltry L."/>
            <person name="Tolentino E."/>
            <person name="Westbrock-Wadman S."/>
            <person name="Yuan Y."/>
            <person name="Brody L.L."/>
            <person name="Coulter S.N."/>
            <person name="Folger K.R."/>
            <person name="Kas A."/>
            <person name="Larbig K."/>
            <person name="Lim R.M."/>
            <person name="Smith K.A."/>
            <person name="Spencer D.H."/>
            <person name="Wong G.K.-S."/>
            <person name="Wu Z."/>
            <person name="Paulsen I.T."/>
            <person name="Reizer J."/>
            <person name="Saier M.H. Jr."/>
            <person name="Hancock R.E.W."/>
            <person name="Lory S."/>
            <person name="Olson M.V."/>
        </authorList>
    </citation>
    <scope>NUCLEOTIDE SEQUENCE [LARGE SCALE GENOMIC DNA]</scope>
    <source>
        <strain>ATCC 15692 / DSM 22644 / CIP 104116 / JCM 14847 / LMG 12228 / 1C / PRS 101 / PAO1</strain>
    </source>
</reference>
<reference key="2">
    <citation type="journal article" date="2001" name="J. Biol. Chem.">
        <title>A new member of the family of di-iron carboxylate proteins. Coq7 (clk-1), a membrane-bound hydroxylase involved in ubiquinone biosynthesis.</title>
        <authorList>
            <person name="Stenmark P."/>
            <person name="Gruenler J."/>
            <person name="Mattsson J."/>
            <person name="Sindelar P.J."/>
            <person name="Nordlund P."/>
            <person name="Berthold D.A."/>
        </authorList>
    </citation>
    <scope>FUNCTION IN UBIQUINONE BIOSYNTHESIS</scope>
    <scope>CATALYTIC ACTIVITY</scope>
    <scope>MEMBER OF THE DI-IRON CARBOXYLATE PROTEIN FAMILY</scope>
    <scope>COFACTOR</scope>
    <scope>PATHWAY</scope>
    <scope>SUBCELLULAR LOCATION</scope>
</reference>
<protein>
    <recommendedName>
        <fullName evidence="1">3-demethoxyubiquinol 3-hydroxylase</fullName>
        <shortName evidence="1 3">DMQ hydroxylase</shortName>
        <ecNumber evidence="1 2">1.14.99.60</ecNumber>
    </recommendedName>
    <alternativeName>
        <fullName evidence="1">2-nonaprenyl-3-methyl-6-methoxy-1,4-benzoquinol hydroxylase</fullName>
    </alternativeName>
</protein>